<organism>
    <name type="scientific">Chlorobaculum tepidum (strain ATCC 49652 / DSM 12025 / NBRC 103806 / TLS)</name>
    <name type="common">Chlorobium tepidum</name>
    <dbReference type="NCBI Taxonomy" id="194439"/>
    <lineage>
        <taxon>Bacteria</taxon>
        <taxon>Pseudomonadati</taxon>
        <taxon>Chlorobiota</taxon>
        <taxon>Chlorobiia</taxon>
        <taxon>Chlorobiales</taxon>
        <taxon>Chlorobiaceae</taxon>
        <taxon>Chlorobaculum</taxon>
    </lineage>
</organism>
<reference key="1">
    <citation type="journal article" date="2002" name="Proc. Natl. Acad. Sci. U.S.A.">
        <title>The complete genome sequence of Chlorobium tepidum TLS, a photosynthetic, anaerobic, green-sulfur bacterium.</title>
        <authorList>
            <person name="Eisen J.A."/>
            <person name="Nelson K.E."/>
            <person name="Paulsen I.T."/>
            <person name="Heidelberg J.F."/>
            <person name="Wu M."/>
            <person name="Dodson R.J."/>
            <person name="DeBoy R.T."/>
            <person name="Gwinn M.L."/>
            <person name="Nelson W.C."/>
            <person name="Haft D.H."/>
            <person name="Hickey E.K."/>
            <person name="Peterson J.D."/>
            <person name="Durkin A.S."/>
            <person name="Kolonay J.F."/>
            <person name="Yang F."/>
            <person name="Holt I.E."/>
            <person name="Umayam L.A."/>
            <person name="Mason T.M."/>
            <person name="Brenner M."/>
            <person name="Shea T.P."/>
            <person name="Parksey D.S."/>
            <person name="Nierman W.C."/>
            <person name="Feldblyum T.V."/>
            <person name="Hansen C.L."/>
            <person name="Craven M.B."/>
            <person name="Radune D."/>
            <person name="Vamathevan J.J."/>
            <person name="Khouri H.M."/>
            <person name="White O."/>
            <person name="Gruber T.M."/>
            <person name="Ketchum K.A."/>
            <person name="Venter J.C."/>
            <person name="Tettelin H."/>
            <person name="Bryant D.A."/>
            <person name="Fraser C.M."/>
        </authorList>
    </citation>
    <scope>NUCLEOTIDE SEQUENCE [LARGE SCALE GENOMIC DNA]</scope>
    <source>
        <strain>ATCC 49652 / DSM 12025 / NBRC 103806 / TLS</strain>
    </source>
</reference>
<comment type="function">
    <text evidence="1">Required for accurate and efficient protein synthesis under certain stress conditions. May act as a fidelity factor of the translation reaction, by catalyzing a one-codon backward translocation of tRNAs on improperly translocated ribosomes. Back-translocation proceeds from a post-translocation (POST) complex to a pre-translocation (PRE) complex, thus giving elongation factor G a second chance to translocate the tRNAs correctly. Binds to ribosomes in a GTP-dependent manner.</text>
</comment>
<comment type="catalytic activity">
    <reaction evidence="1">
        <text>GTP + H2O = GDP + phosphate + H(+)</text>
        <dbReference type="Rhea" id="RHEA:19669"/>
        <dbReference type="ChEBI" id="CHEBI:15377"/>
        <dbReference type="ChEBI" id="CHEBI:15378"/>
        <dbReference type="ChEBI" id="CHEBI:37565"/>
        <dbReference type="ChEBI" id="CHEBI:43474"/>
        <dbReference type="ChEBI" id="CHEBI:58189"/>
        <dbReference type="EC" id="3.6.5.n1"/>
    </reaction>
</comment>
<comment type="subcellular location">
    <subcellularLocation>
        <location evidence="1">Cell inner membrane</location>
        <topology evidence="1">Peripheral membrane protein</topology>
        <orientation evidence="1">Cytoplasmic side</orientation>
    </subcellularLocation>
</comment>
<comment type="similarity">
    <text evidence="1">Belongs to the TRAFAC class translation factor GTPase superfamily. Classic translation factor GTPase family. LepA subfamily.</text>
</comment>
<accession>Q8KCH0</accession>
<name>LEPA_CHLTE</name>
<protein>
    <recommendedName>
        <fullName evidence="1">Elongation factor 4</fullName>
        <shortName evidence="1">EF-4</shortName>
        <ecNumber evidence="1">3.6.5.n1</ecNumber>
    </recommendedName>
    <alternativeName>
        <fullName evidence="1">Ribosomal back-translocase LepA</fullName>
    </alternativeName>
</protein>
<keyword id="KW-0997">Cell inner membrane</keyword>
<keyword id="KW-1003">Cell membrane</keyword>
<keyword id="KW-0342">GTP-binding</keyword>
<keyword id="KW-0378">Hydrolase</keyword>
<keyword id="KW-0472">Membrane</keyword>
<keyword id="KW-0547">Nucleotide-binding</keyword>
<keyword id="KW-0648">Protein biosynthesis</keyword>
<keyword id="KW-1185">Reference proteome</keyword>
<sequence length="605" mass="67768">MPPTGTEVGMIRNFCIIAHIDHGKSTLADRLLEVTHTLERNQMSTAQVLDDMDLERERGITIKSHAVQMRYTAKDGQDYILNLIDTPGHVDFSYEVSRSLAACEGALLVVDATQGVEAQTIANLYLAIEAGLEIIPVINKIDLPSSDVEGVARQIIDLIGVNRDEILRVSAKNGIGVDDLMEAIVARVPAPADNRQMPLRALIFDSVFDAYRGAIAYIRIVDGVLKKGDRVRFFANDKIFMADEIGTMSLKRNPVDILEAGNVGYLICSIKDVKDAKVGDTVTLVENPAAERLAGYKDVKPMVFSGLYPVESNEFEDLRESLEKLSLNDASLVYTPETSAALGFGFRCGFLGLLHMEIIQERLEREYGVNIITTVPNVEYRVIMTSGETVEVDNPSKMPETTKINWIEEPYVSMQIITMSEYIGNIMKLGMERRGEYKNTDYLDTSRVNIHFEFPLGEVVFDFHDKLKSISKGYASMDYEYIGYRRSDLVKLDVLLNGEPVDALSSIVHRSKSYEWGRKLCQKLKGIIPRQMYEVAIQAAIGSRVIARESISAMRKNVLAKCYGGDISRKRKLLEKQKEGKKRMKQVGRVEVPQEAFLAVLNIDE</sequence>
<gene>
    <name evidence="1" type="primary">lepA</name>
    <name type="ordered locus">CT1451</name>
</gene>
<dbReference type="EC" id="3.6.5.n1" evidence="1"/>
<dbReference type="EMBL" id="AE006470">
    <property type="protein sequence ID" value="AAM72679.1"/>
    <property type="molecule type" value="Genomic_DNA"/>
</dbReference>
<dbReference type="RefSeq" id="NP_662337.1">
    <property type="nucleotide sequence ID" value="NC_002932.3"/>
</dbReference>
<dbReference type="RefSeq" id="WP_010933118.1">
    <property type="nucleotide sequence ID" value="NC_002932.3"/>
</dbReference>
<dbReference type="SMR" id="Q8KCH0"/>
<dbReference type="STRING" id="194439.CT1451"/>
<dbReference type="EnsemblBacteria" id="AAM72679">
    <property type="protein sequence ID" value="AAM72679"/>
    <property type="gene ID" value="CT1451"/>
</dbReference>
<dbReference type="KEGG" id="cte:CT1451"/>
<dbReference type="PATRIC" id="fig|194439.7.peg.1317"/>
<dbReference type="eggNOG" id="COG0481">
    <property type="taxonomic scope" value="Bacteria"/>
</dbReference>
<dbReference type="HOGENOM" id="CLU_009995_3_3_10"/>
<dbReference type="OrthoDB" id="9801591at2"/>
<dbReference type="Proteomes" id="UP000001007">
    <property type="component" value="Chromosome"/>
</dbReference>
<dbReference type="GO" id="GO:0005886">
    <property type="term" value="C:plasma membrane"/>
    <property type="evidence" value="ECO:0007669"/>
    <property type="project" value="UniProtKB-SubCell"/>
</dbReference>
<dbReference type="GO" id="GO:0005525">
    <property type="term" value="F:GTP binding"/>
    <property type="evidence" value="ECO:0007669"/>
    <property type="project" value="UniProtKB-UniRule"/>
</dbReference>
<dbReference type="GO" id="GO:0003924">
    <property type="term" value="F:GTPase activity"/>
    <property type="evidence" value="ECO:0007669"/>
    <property type="project" value="UniProtKB-UniRule"/>
</dbReference>
<dbReference type="GO" id="GO:0043022">
    <property type="term" value="F:ribosome binding"/>
    <property type="evidence" value="ECO:0007669"/>
    <property type="project" value="UniProtKB-UniRule"/>
</dbReference>
<dbReference type="GO" id="GO:0003746">
    <property type="term" value="F:translation elongation factor activity"/>
    <property type="evidence" value="ECO:0007669"/>
    <property type="project" value="UniProtKB-UniRule"/>
</dbReference>
<dbReference type="GO" id="GO:0045727">
    <property type="term" value="P:positive regulation of translation"/>
    <property type="evidence" value="ECO:0007669"/>
    <property type="project" value="UniProtKB-UniRule"/>
</dbReference>
<dbReference type="CDD" id="cd03699">
    <property type="entry name" value="EF4_II"/>
    <property type="match status" value="1"/>
</dbReference>
<dbReference type="CDD" id="cd16260">
    <property type="entry name" value="EF4_III"/>
    <property type="match status" value="1"/>
</dbReference>
<dbReference type="CDD" id="cd01890">
    <property type="entry name" value="LepA"/>
    <property type="match status" value="1"/>
</dbReference>
<dbReference type="CDD" id="cd03709">
    <property type="entry name" value="lepA_C"/>
    <property type="match status" value="1"/>
</dbReference>
<dbReference type="FunFam" id="3.40.50.300:FF:000078">
    <property type="entry name" value="Elongation factor 4"/>
    <property type="match status" value="1"/>
</dbReference>
<dbReference type="FunFam" id="2.40.30.10:FF:000015">
    <property type="entry name" value="Translation factor GUF1, mitochondrial"/>
    <property type="match status" value="1"/>
</dbReference>
<dbReference type="FunFam" id="3.30.70.240:FF:000007">
    <property type="entry name" value="Translation factor GUF1, mitochondrial"/>
    <property type="match status" value="1"/>
</dbReference>
<dbReference type="FunFam" id="3.30.70.2570:FF:000001">
    <property type="entry name" value="Translation factor GUF1, mitochondrial"/>
    <property type="match status" value="1"/>
</dbReference>
<dbReference type="FunFam" id="3.30.70.870:FF:000004">
    <property type="entry name" value="Translation factor GUF1, mitochondrial"/>
    <property type="match status" value="1"/>
</dbReference>
<dbReference type="Gene3D" id="3.30.70.240">
    <property type="match status" value="1"/>
</dbReference>
<dbReference type="Gene3D" id="3.30.70.2570">
    <property type="entry name" value="Elongation factor 4, C-terminal domain"/>
    <property type="match status" value="1"/>
</dbReference>
<dbReference type="Gene3D" id="3.30.70.870">
    <property type="entry name" value="Elongation Factor G (Translational Gtpase), domain 3"/>
    <property type="match status" value="1"/>
</dbReference>
<dbReference type="Gene3D" id="3.40.50.300">
    <property type="entry name" value="P-loop containing nucleotide triphosphate hydrolases"/>
    <property type="match status" value="1"/>
</dbReference>
<dbReference type="Gene3D" id="2.40.30.10">
    <property type="entry name" value="Translation factors"/>
    <property type="match status" value="1"/>
</dbReference>
<dbReference type="HAMAP" id="MF_00071">
    <property type="entry name" value="LepA"/>
    <property type="match status" value="1"/>
</dbReference>
<dbReference type="InterPro" id="IPR006297">
    <property type="entry name" value="EF-4"/>
</dbReference>
<dbReference type="InterPro" id="IPR035647">
    <property type="entry name" value="EFG_III/V"/>
</dbReference>
<dbReference type="InterPro" id="IPR000640">
    <property type="entry name" value="EFG_V-like"/>
</dbReference>
<dbReference type="InterPro" id="IPR004161">
    <property type="entry name" value="EFTu-like_2"/>
</dbReference>
<dbReference type="InterPro" id="IPR038363">
    <property type="entry name" value="LepA_C_sf"/>
</dbReference>
<dbReference type="InterPro" id="IPR013842">
    <property type="entry name" value="LepA_CTD"/>
</dbReference>
<dbReference type="InterPro" id="IPR035654">
    <property type="entry name" value="LepA_IV"/>
</dbReference>
<dbReference type="InterPro" id="IPR027417">
    <property type="entry name" value="P-loop_NTPase"/>
</dbReference>
<dbReference type="InterPro" id="IPR005225">
    <property type="entry name" value="Small_GTP-bd"/>
</dbReference>
<dbReference type="InterPro" id="IPR000795">
    <property type="entry name" value="T_Tr_GTP-bd_dom"/>
</dbReference>
<dbReference type="InterPro" id="IPR009000">
    <property type="entry name" value="Transl_B-barrel_sf"/>
</dbReference>
<dbReference type="NCBIfam" id="TIGR01393">
    <property type="entry name" value="lepA"/>
    <property type="match status" value="1"/>
</dbReference>
<dbReference type="NCBIfam" id="TIGR00231">
    <property type="entry name" value="small_GTP"/>
    <property type="match status" value="1"/>
</dbReference>
<dbReference type="PANTHER" id="PTHR43512:SF4">
    <property type="entry name" value="TRANSLATION FACTOR GUF1 HOMOLOG, CHLOROPLASTIC"/>
    <property type="match status" value="1"/>
</dbReference>
<dbReference type="PANTHER" id="PTHR43512">
    <property type="entry name" value="TRANSLATION FACTOR GUF1-RELATED"/>
    <property type="match status" value="1"/>
</dbReference>
<dbReference type="Pfam" id="PF00679">
    <property type="entry name" value="EFG_C"/>
    <property type="match status" value="1"/>
</dbReference>
<dbReference type="Pfam" id="PF00009">
    <property type="entry name" value="GTP_EFTU"/>
    <property type="match status" value="1"/>
</dbReference>
<dbReference type="Pfam" id="PF03144">
    <property type="entry name" value="GTP_EFTU_D2"/>
    <property type="match status" value="1"/>
</dbReference>
<dbReference type="Pfam" id="PF06421">
    <property type="entry name" value="LepA_C"/>
    <property type="match status" value="1"/>
</dbReference>
<dbReference type="PRINTS" id="PR00315">
    <property type="entry name" value="ELONGATNFCT"/>
</dbReference>
<dbReference type="SUPFAM" id="SSF54980">
    <property type="entry name" value="EF-G C-terminal domain-like"/>
    <property type="match status" value="2"/>
</dbReference>
<dbReference type="SUPFAM" id="SSF52540">
    <property type="entry name" value="P-loop containing nucleoside triphosphate hydrolases"/>
    <property type="match status" value="1"/>
</dbReference>
<dbReference type="SUPFAM" id="SSF50447">
    <property type="entry name" value="Translation proteins"/>
    <property type="match status" value="1"/>
</dbReference>
<dbReference type="PROSITE" id="PS51722">
    <property type="entry name" value="G_TR_2"/>
    <property type="match status" value="1"/>
</dbReference>
<evidence type="ECO:0000255" key="1">
    <source>
        <dbReference type="HAMAP-Rule" id="MF_00071"/>
    </source>
</evidence>
<feature type="chain" id="PRO_0000176258" description="Elongation factor 4">
    <location>
        <begin position="1"/>
        <end position="605"/>
    </location>
</feature>
<feature type="domain" description="tr-type G">
    <location>
        <begin position="9"/>
        <end position="192"/>
    </location>
</feature>
<feature type="binding site" evidence="1">
    <location>
        <begin position="21"/>
        <end position="26"/>
    </location>
    <ligand>
        <name>GTP</name>
        <dbReference type="ChEBI" id="CHEBI:37565"/>
    </ligand>
</feature>
<feature type="binding site" evidence="1">
    <location>
        <begin position="139"/>
        <end position="142"/>
    </location>
    <ligand>
        <name>GTP</name>
        <dbReference type="ChEBI" id="CHEBI:37565"/>
    </ligand>
</feature>
<proteinExistence type="inferred from homology"/>